<name>KAD_CLOB8</name>
<sequence length="216" mass="23905">MKIVLLGPPGAGKGTQAKSISNKYSIPHISTGDIFRKNISENTPLGIEAKGYIDNGQLVPDEVTINMVKDRLQQDDCKVGYLLDGFPRTVAQADALNNFLVDKNEQLDTALLIKVPNEFILERMTGRRVCPSCGASYHVKFNPPTNEGKCDLCGSEVIQRKDDTVETVKERLDVYQKETQPLIEFYGEKGLLSEVDGTKAINEVFRGICELLGNNK</sequence>
<protein>
    <recommendedName>
        <fullName evidence="1">Adenylate kinase</fullName>
        <shortName evidence="1">AK</shortName>
        <ecNumber evidence="1">2.7.4.3</ecNumber>
    </recommendedName>
    <alternativeName>
        <fullName evidence="1">ATP-AMP transphosphorylase</fullName>
    </alternativeName>
    <alternativeName>
        <fullName evidence="1">ATP:AMP phosphotransferase</fullName>
    </alternativeName>
    <alternativeName>
        <fullName evidence="1">Adenylate monophosphate kinase</fullName>
    </alternativeName>
</protein>
<gene>
    <name evidence="1" type="primary">adk</name>
    <name type="ordered locus">Cbei_0172</name>
</gene>
<feature type="chain" id="PRO_1000078267" description="Adenylate kinase">
    <location>
        <begin position="1"/>
        <end position="216"/>
    </location>
</feature>
<feature type="region of interest" description="NMP" evidence="1">
    <location>
        <begin position="30"/>
        <end position="59"/>
    </location>
</feature>
<feature type="region of interest" description="LID" evidence="1">
    <location>
        <begin position="126"/>
        <end position="163"/>
    </location>
</feature>
<feature type="binding site" evidence="1">
    <location>
        <begin position="10"/>
        <end position="15"/>
    </location>
    <ligand>
        <name>ATP</name>
        <dbReference type="ChEBI" id="CHEBI:30616"/>
    </ligand>
</feature>
<feature type="binding site" evidence="1">
    <location>
        <position position="31"/>
    </location>
    <ligand>
        <name>AMP</name>
        <dbReference type="ChEBI" id="CHEBI:456215"/>
    </ligand>
</feature>
<feature type="binding site" evidence="1">
    <location>
        <position position="36"/>
    </location>
    <ligand>
        <name>AMP</name>
        <dbReference type="ChEBI" id="CHEBI:456215"/>
    </ligand>
</feature>
<feature type="binding site" evidence="1">
    <location>
        <begin position="57"/>
        <end position="59"/>
    </location>
    <ligand>
        <name>AMP</name>
        <dbReference type="ChEBI" id="CHEBI:456215"/>
    </ligand>
</feature>
<feature type="binding site" evidence="1">
    <location>
        <begin position="85"/>
        <end position="88"/>
    </location>
    <ligand>
        <name>AMP</name>
        <dbReference type="ChEBI" id="CHEBI:456215"/>
    </ligand>
</feature>
<feature type="binding site" evidence="1">
    <location>
        <position position="92"/>
    </location>
    <ligand>
        <name>AMP</name>
        <dbReference type="ChEBI" id="CHEBI:456215"/>
    </ligand>
</feature>
<feature type="binding site" evidence="1">
    <location>
        <position position="127"/>
    </location>
    <ligand>
        <name>ATP</name>
        <dbReference type="ChEBI" id="CHEBI:30616"/>
    </ligand>
</feature>
<feature type="binding site" evidence="1">
    <location>
        <position position="130"/>
    </location>
    <ligand>
        <name>Zn(2+)</name>
        <dbReference type="ChEBI" id="CHEBI:29105"/>
        <note>structural</note>
    </ligand>
</feature>
<feature type="binding site" evidence="1">
    <location>
        <position position="133"/>
    </location>
    <ligand>
        <name>Zn(2+)</name>
        <dbReference type="ChEBI" id="CHEBI:29105"/>
        <note>structural</note>
    </ligand>
</feature>
<feature type="binding site" evidence="1">
    <location>
        <begin position="136"/>
        <end position="137"/>
    </location>
    <ligand>
        <name>ATP</name>
        <dbReference type="ChEBI" id="CHEBI:30616"/>
    </ligand>
</feature>
<feature type="binding site" evidence="1">
    <location>
        <position position="150"/>
    </location>
    <ligand>
        <name>Zn(2+)</name>
        <dbReference type="ChEBI" id="CHEBI:29105"/>
        <note>structural</note>
    </ligand>
</feature>
<feature type="binding site" evidence="1">
    <location>
        <position position="153"/>
    </location>
    <ligand>
        <name>Zn(2+)</name>
        <dbReference type="ChEBI" id="CHEBI:29105"/>
        <note>structural</note>
    </ligand>
</feature>
<feature type="binding site" evidence="1">
    <location>
        <position position="160"/>
    </location>
    <ligand>
        <name>AMP</name>
        <dbReference type="ChEBI" id="CHEBI:456215"/>
    </ligand>
</feature>
<feature type="binding site" evidence="1">
    <location>
        <position position="171"/>
    </location>
    <ligand>
        <name>AMP</name>
        <dbReference type="ChEBI" id="CHEBI:456215"/>
    </ligand>
</feature>
<feature type="binding site" evidence="1">
    <location>
        <position position="199"/>
    </location>
    <ligand>
        <name>ATP</name>
        <dbReference type="ChEBI" id="CHEBI:30616"/>
    </ligand>
</feature>
<dbReference type="EC" id="2.7.4.3" evidence="1"/>
<dbReference type="EMBL" id="CP000721">
    <property type="protein sequence ID" value="ABR32362.1"/>
    <property type="molecule type" value="Genomic_DNA"/>
</dbReference>
<dbReference type="RefSeq" id="WP_011967527.1">
    <property type="nucleotide sequence ID" value="NC_009617.1"/>
</dbReference>
<dbReference type="SMR" id="A6LPT2"/>
<dbReference type="KEGG" id="cbe:Cbei_0172"/>
<dbReference type="eggNOG" id="COG0563">
    <property type="taxonomic scope" value="Bacteria"/>
</dbReference>
<dbReference type="HOGENOM" id="CLU_032354_1_2_9"/>
<dbReference type="UniPathway" id="UPA00588">
    <property type="reaction ID" value="UER00649"/>
</dbReference>
<dbReference type="Proteomes" id="UP000000565">
    <property type="component" value="Chromosome"/>
</dbReference>
<dbReference type="GO" id="GO:0005737">
    <property type="term" value="C:cytoplasm"/>
    <property type="evidence" value="ECO:0007669"/>
    <property type="project" value="UniProtKB-SubCell"/>
</dbReference>
<dbReference type="GO" id="GO:0004017">
    <property type="term" value="F:adenylate kinase activity"/>
    <property type="evidence" value="ECO:0007669"/>
    <property type="project" value="UniProtKB-UniRule"/>
</dbReference>
<dbReference type="GO" id="GO:0005524">
    <property type="term" value="F:ATP binding"/>
    <property type="evidence" value="ECO:0007669"/>
    <property type="project" value="UniProtKB-UniRule"/>
</dbReference>
<dbReference type="GO" id="GO:0008270">
    <property type="term" value="F:zinc ion binding"/>
    <property type="evidence" value="ECO:0007669"/>
    <property type="project" value="UniProtKB-UniRule"/>
</dbReference>
<dbReference type="GO" id="GO:0044209">
    <property type="term" value="P:AMP salvage"/>
    <property type="evidence" value="ECO:0007669"/>
    <property type="project" value="UniProtKB-UniRule"/>
</dbReference>
<dbReference type="CDD" id="cd01428">
    <property type="entry name" value="ADK"/>
    <property type="match status" value="1"/>
</dbReference>
<dbReference type="FunFam" id="3.40.50.300:FF:000106">
    <property type="entry name" value="Adenylate kinase mitochondrial"/>
    <property type="match status" value="1"/>
</dbReference>
<dbReference type="Gene3D" id="3.40.50.300">
    <property type="entry name" value="P-loop containing nucleotide triphosphate hydrolases"/>
    <property type="match status" value="1"/>
</dbReference>
<dbReference type="HAMAP" id="MF_00235">
    <property type="entry name" value="Adenylate_kinase_Adk"/>
    <property type="match status" value="1"/>
</dbReference>
<dbReference type="InterPro" id="IPR006259">
    <property type="entry name" value="Adenyl_kin_sub"/>
</dbReference>
<dbReference type="InterPro" id="IPR000850">
    <property type="entry name" value="Adenylat/UMP-CMP_kin"/>
</dbReference>
<dbReference type="InterPro" id="IPR033690">
    <property type="entry name" value="Adenylat_kinase_CS"/>
</dbReference>
<dbReference type="InterPro" id="IPR007862">
    <property type="entry name" value="Adenylate_kinase_lid-dom"/>
</dbReference>
<dbReference type="InterPro" id="IPR027417">
    <property type="entry name" value="P-loop_NTPase"/>
</dbReference>
<dbReference type="NCBIfam" id="TIGR01351">
    <property type="entry name" value="adk"/>
    <property type="match status" value="1"/>
</dbReference>
<dbReference type="NCBIfam" id="NF001380">
    <property type="entry name" value="PRK00279.1-2"/>
    <property type="match status" value="1"/>
</dbReference>
<dbReference type="NCBIfam" id="NF001381">
    <property type="entry name" value="PRK00279.1-3"/>
    <property type="match status" value="1"/>
</dbReference>
<dbReference type="NCBIfam" id="NF011100">
    <property type="entry name" value="PRK14527.1"/>
    <property type="match status" value="1"/>
</dbReference>
<dbReference type="PANTHER" id="PTHR23359">
    <property type="entry name" value="NUCLEOTIDE KINASE"/>
    <property type="match status" value="1"/>
</dbReference>
<dbReference type="Pfam" id="PF00406">
    <property type="entry name" value="ADK"/>
    <property type="match status" value="1"/>
</dbReference>
<dbReference type="Pfam" id="PF05191">
    <property type="entry name" value="ADK_lid"/>
    <property type="match status" value="1"/>
</dbReference>
<dbReference type="PRINTS" id="PR00094">
    <property type="entry name" value="ADENYLTKNASE"/>
</dbReference>
<dbReference type="SUPFAM" id="SSF52540">
    <property type="entry name" value="P-loop containing nucleoside triphosphate hydrolases"/>
    <property type="match status" value="1"/>
</dbReference>
<dbReference type="PROSITE" id="PS00113">
    <property type="entry name" value="ADENYLATE_KINASE"/>
    <property type="match status" value="1"/>
</dbReference>
<comment type="function">
    <text evidence="1">Catalyzes the reversible transfer of the terminal phosphate group between ATP and AMP. Plays an important role in cellular energy homeostasis and in adenine nucleotide metabolism.</text>
</comment>
<comment type="catalytic activity">
    <reaction evidence="1">
        <text>AMP + ATP = 2 ADP</text>
        <dbReference type="Rhea" id="RHEA:12973"/>
        <dbReference type="ChEBI" id="CHEBI:30616"/>
        <dbReference type="ChEBI" id="CHEBI:456215"/>
        <dbReference type="ChEBI" id="CHEBI:456216"/>
        <dbReference type="EC" id="2.7.4.3"/>
    </reaction>
</comment>
<comment type="pathway">
    <text evidence="1">Purine metabolism; AMP biosynthesis via salvage pathway; AMP from ADP: step 1/1.</text>
</comment>
<comment type="subunit">
    <text evidence="1">Monomer.</text>
</comment>
<comment type="subcellular location">
    <subcellularLocation>
        <location evidence="1">Cytoplasm</location>
    </subcellularLocation>
</comment>
<comment type="domain">
    <text evidence="1">Consists of three domains, a large central CORE domain and two small peripheral domains, NMPbind and LID, which undergo movements during catalysis. The LID domain closes over the site of phosphoryl transfer upon ATP binding. Assembling and dissambling the active center during each catalytic cycle provides an effective means to prevent ATP hydrolysis. Some bacteria have evolved a zinc-coordinating structure that stabilizes the LID domain.</text>
</comment>
<comment type="similarity">
    <text evidence="1">Belongs to the adenylate kinase family.</text>
</comment>
<evidence type="ECO:0000255" key="1">
    <source>
        <dbReference type="HAMAP-Rule" id="MF_00235"/>
    </source>
</evidence>
<reference key="1">
    <citation type="submission" date="2007-06" db="EMBL/GenBank/DDBJ databases">
        <title>Complete sequence of Clostridium beijerinckii NCIMB 8052.</title>
        <authorList>
            <consortium name="US DOE Joint Genome Institute"/>
            <person name="Copeland A."/>
            <person name="Lucas S."/>
            <person name="Lapidus A."/>
            <person name="Barry K."/>
            <person name="Detter J.C."/>
            <person name="Glavina del Rio T."/>
            <person name="Hammon N."/>
            <person name="Israni S."/>
            <person name="Dalin E."/>
            <person name="Tice H."/>
            <person name="Pitluck S."/>
            <person name="Sims D."/>
            <person name="Brettin T."/>
            <person name="Bruce D."/>
            <person name="Tapia R."/>
            <person name="Brainard J."/>
            <person name="Schmutz J."/>
            <person name="Larimer F."/>
            <person name="Land M."/>
            <person name="Hauser L."/>
            <person name="Kyrpides N."/>
            <person name="Mikhailova N."/>
            <person name="Bennet G."/>
            <person name="Cann I."/>
            <person name="Chen J.-S."/>
            <person name="Contreras A.L."/>
            <person name="Jones D."/>
            <person name="Kashket E."/>
            <person name="Mitchell W."/>
            <person name="Stoddard S."/>
            <person name="Schwarz W."/>
            <person name="Qureshi N."/>
            <person name="Young M."/>
            <person name="Shi Z."/>
            <person name="Ezeji T."/>
            <person name="White B."/>
            <person name="Blaschek H."/>
            <person name="Richardson P."/>
        </authorList>
    </citation>
    <scope>NUCLEOTIDE SEQUENCE [LARGE SCALE GENOMIC DNA]</scope>
    <source>
        <strain>ATCC 51743 / NCIMB 8052</strain>
    </source>
</reference>
<accession>A6LPT2</accession>
<keyword id="KW-0067">ATP-binding</keyword>
<keyword id="KW-0963">Cytoplasm</keyword>
<keyword id="KW-0418">Kinase</keyword>
<keyword id="KW-0479">Metal-binding</keyword>
<keyword id="KW-0545">Nucleotide biosynthesis</keyword>
<keyword id="KW-0547">Nucleotide-binding</keyword>
<keyword id="KW-0808">Transferase</keyword>
<keyword id="KW-0862">Zinc</keyword>
<organism>
    <name type="scientific">Clostridium beijerinckii (strain ATCC 51743 / NCIMB 8052)</name>
    <name type="common">Clostridium acetobutylicum</name>
    <dbReference type="NCBI Taxonomy" id="290402"/>
    <lineage>
        <taxon>Bacteria</taxon>
        <taxon>Bacillati</taxon>
        <taxon>Bacillota</taxon>
        <taxon>Clostridia</taxon>
        <taxon>Eubacteriales</taxon>
        <taxon>Clostridiaceae</taxon>
        <taxon>Clostridium</taxon>
    </lineage>
</organism>
<proteinExistence type="inferred from homology"/>